<reference key="1">
    <citation type="journal article" date="1995" name="Plant Mol. Biol. Rep.">
        <title>The chloroplast genome of a chlorophyll a+c-containing alga, Odontella sinensis.</title>
        <authorList>
            <person name="Kowallik K.V."/>
            <person name="Stoebe B."/>
            <person name="Schaffran I."/>
            <person name="Kroth-Pancic P."/>
            <person name="Freier U."/>
        </authorList>
    </citation>
    <scope>NUCLEOTIDE SEQUENCE [LARGE SCALE GENOMIC DNA]</scope>
</reference>
<keyword id="KW-0150">Chloroplast</keyword>
<keyword id="KW-0934">Plastid</keyword>
<keyword id="KW-0687">Ribonucleoprotein</keyword>
<keyword id="KW-0689">Ribosomal protein</keyword>
<keyword id="KW-0694">RNA-binding</keyword>
<keyword id="KW-0699">rRNA-binding</keyword>
<protein>
    <recommendedName>
        <fullName evidence="2">Large ribosomal subunit protein uL6c</fullName>
    </recommendedName>
    <alternativeName>
        <fullName>50S ribosomal protein L6, chloroplastic</fullName>
    </alternativeName>
</protein>
<geneLocation type="chloroplast"/>
<name>RK6_TRICV</name>
<organism>
    <name type="scientific">Trieres chinensis</name>
    <name type="common">Marine centric diatom</name>
    <name type="synonym">Odontella sinensis</name>
    <dbReference type="NCBI Taxonomy" id="1514140"/>
    <lineage>
        <taxon>Eukaryota</taxon>
        <taxon>Sar</taxon>
        <taxon>Stramenopiles</taxon>
        <taxon>Ochrophyta</taxon>
        <taxon>Bacillariophyta</taxon>
        <taxon>Mediophyceae</taxon>
        <taxon>Biddulphiophycidae</taxon>
        <taxon>Eupodiscales</taxon>
        <taxon>Parodontellaceae</taxon>
        <taxon>Trieres</taxon>
    </lineage>
</organism>
<gene>
    <name type="primary">rpl6</name>
</gene>
<accession>P49548</accession>
<proteinExistence type="inferred from homology"/>
<sequence length="179" mass="19392">MSRIGKLPIKIPANVDITCSGPDLTVKGKFGTLHNTIPDAIGIEEIDGSLIVNVKDNTRSNRALHGLYRTLINNMVTGVSEQFQLTLNLQGVGYRASVQGNSIILNLGYSHPVELVIPEGISVEVVQNTTINLKACDKGNLGLFASNIRSWRPPEPYKGKGILYKGEIVKRKAGKSGKK</sequence>
<dbReference type="EMBL" id="Z67753">
    <property type="protein sequence ID" value="CAA91634.1"/>
    <property type="molecule type" value="Genomic_DNA"/>
</dbReference>
<dbReference type="PIR" id="S78261">
    <property type="entry name" value="S78261"/>
</dbReference>
<dbReference type="RefSeq" id="NP_043602.1">
    <property type="nucleotide sequence ID" value="NC_001713.1"/>
</dbReference>
<dbReference type="SMR" id="P49548"/>
<dbReference type="GeneID" id="801794"/>
<dbReference type="GO" id="GO:0009507">
    <property type="term" value="C:chloroplast"/>
    <property type="evidence" value="ECO:0007669"/>
    <property type="project" value="UniProtKB-SubCell"/>
</dbReference>
<dbReference type="GO" id="GO:1990904">
    <property type="term" value="C:ribonucleoprotein complex"/>
    <property type="evidence" value="ECO:0007669"/>
    <property type="project" value="UniProtKB-KW"/>
</dbReference>
<dbReference type="GO" id="GO:0005840">
    <property type="term" value="C:ribosome"/>
    <property type="evidence" value="ECO:0007669"/>
    <property type="project" value="UniProtKB-KW"/>
</dbReference>
<dbReference type="GO" id="GO:0019843">
    <property type="term" value="F:rRNA binding"/>
    <property type="evidence" value="ECO:0007669"/>
    <property type="project" value="UniProtKB-UniRule"/>
</dbReference>
<dbReference type="GO" id="GO:0003735">
    <property type="term" value="F:structural constituent of ribosome"/>
    <property type="evidence" value="ECO:0007669"/>
    <property type="project" value="InterPro"/>
</dbReference>
<dbReference type="GO" id="GO:0006412">
    <property type="term" value="P:translation"/>
    <property type="evidence" value="ECO:0007669"/>
    <property type="project" value="UniProtKB-UniRule"/>
</dbReference>
<dbReference type="FunFam" id="3.90.930.12:FF:000001">
    <property type="entry name" value="50S ribosomal protein L6"/>
    <property type="match status" value="1"/>
</dbReference>
<dbReference type="FunFam" id="3.90.930.12:FF:000002">
    <property type="entry name" value="50S ribosomal protein L6"/>
    <property type="match status" value="1"/>
</dbReference>
<dbReference type="Gene3D" id="3.90.930.12">
    <property type="entry name" value="Ribosomal protein L6, alpha-beta domain"/>
    <property type="match status" value="2"/>
</dbReference>
<dbReference type="HAMAP" id="MF_01365_B">
    <property type="entry name" value="Ribosomal_uL6_B"/>
    <property type="match status" value="1"/>
</dbReference>
<dbReference type="InterPro" id="IPR000702">
    <property type="entry name" value="Ribosomal_uL6-like"/>
</dbReference>
<dbReference type="InterPro" id="IPR036789">
    <property type="entry name" value="Ribosomal_uL6-like_a/b-dom_sf"/>
</dbReference>
<dbReference type="InterPro" id="IPR020040">
    <property type="entry name" value="Ribosomal_uL6_a/b-dom"/>
</dbReference>
<dbReference type="InterPro" id="IPR019906">
    <property type="entry name" value="Ribosomal_uL6_bac-type"/>
</dbReference>
<dbReference type="InterPro" id="IPR002358">
    <property type="entry name" value="Ribosomal_uL6_CS"/>
</dbReference>
<dbReference type="NCBIfam" id="TIGR03654">
    <property type="entry name" value="L6_bact"/>
    <property type="match status" value="1"/>
</dbReference>
<dbReference type="PANTHER" id="PTHR11655">
    <property type="entry name" value="60S/50S RIBOSOMAL PROTEIN L6/L9"/>
    <property type="match status" value="1"/>
</dbReference>
<dbReference type="PANTHER" id="PTHR11655:SF14">
    <property type="entry name" value="LARGE RIBOSOMAL SUBUNIT PROTEIN UL6M"/>
    <property type="match status" value="1"/>
</dbReference>
<dbReference type="Pfam" id="PF00347">
    <property type="entry name" value="Ribosomal_L6"/>
    <property type="match status" value="2"/>
</dbReference>
<dbReference type="PIRSF" id="PIRSF002162">
    <property type="entry name" value="Ribosomal_L6"/>
    <property type="match status" value="1"/>
</dbReference>
<dbReference type="PRINTS" id="PR00059">
    <property type="entry name" value="RIBOSOMALL6"/>
</dbReference>
<dbReference type="SUPFAM" id="SSF56053">
    <property type="entry name" value="Ribosomal protein L6"/>
    <property type="match status" value="2"/>
</dbReference>
<dbReference type="PROSITE" id="PS00525">
    <property type="entry name" value="RIBOSOMAL_L6_1"/>
    <property type="match status" value="1"/>
</dbReference>
<evidence type="ECO:0000250" key="1"/>
<evidence type="ECO:0000305" key="2"/>
<feature type="chain" id="PRO_0000131079" description="Large ribosomal subunit protein uL6c">
    <location>
        <begin position="1"/>
        <end position="179"/>
    </location>
</feature>
<comment type="function">
    <text evidence="1">Binds 23S rRNA.</text>
</comment>
<comment type="subunit">
    <text evidence="1">Part of the 50S ribosomal subunit.</text>
</comment>
<comment type="subcellular location">
    <subcellularLocation>
        <location>Plastid</location>
        <location>Chloroplast</location>
    </subcellularLocation>
</comment>
<comment type="similarity">
    <text evidence="2">Belongs to the universal ribosomal protein uL6 family.</text>
</comment>